<reference key="1">
    <citation type="journal article" date="2008" name="Genome Res.">
        <title>Comparative genome analysis of Salmonella enteritidis PT4 and Salmonella gallinarum 287/91 provides insights into evolutionary and host adaptation pathways.</title>
        <authorList>
            <person name="Thomson N.R."/>
            <person name="Clayton D.J."/>
            <person name="Windhorst D."/>
            <person name="Vernikos G."/>
            <person name="Davidson S."/>
            <person name="Churcher C."/>
            <person name="Quail M.A."/>
            <person name="Stevens M."/>
            <person name="Jones M.A."/>
            <person name="Watson M."/>
            <person name="Barron A."/>
            <person name="Layton A."/>
            <person name="Pickard D."/>
            <person name="Kingsley R.A."/>
            <person name="Bignell A."/>
            <person name="Clark L."/>
            <person name="Harris B."/>
            <person name="Ormond D."/>
            <person name="Abdellah Z."/>
            <person name="Brooks K."/>
            <person name="Cherevach I."/>
            <person name="Chillingworth T."/>
            <person name="Woodward J."/>
            <person name="Norberczak H."/>
            <person name="Lord A."/>
            <person name="Arrowsmith C."/>
            <person name="Jagels K."/>
            <person name="Moule S."/>
            <person name="Mungall K."/>
            <person name="Saunders M."/>
            <person name="Whitehead S."/>
            <person name="Chabalgoity J.A."/>
            <person name="Maskell D."/>
            <person name="Humphreys T."/>
            <person name="Roberts M."/>
            <person name="Barrow P.A."/>
            <person name="Dougan G."/>
            <person name="Parkhill J."/>
        </authorList>
    </citation>
    <scope>NUCLEOTIDE SEQUENCE [LARGE SCALE GENOMIC DNA]</scope>
    <source>
        <strain>287/91 / NCTC 13346</strain>
    </source>
</reference>
<proteinExistence type="inferred from homology"/>
<protein>
    <recommendedName>
        <fullName evidence="1">Fructose-6-phosphate aldolase</fullName>
        <ecNumber evidence="1">4.1.2.-</ecNumber>
    </recommendedName>
</protein>
<feature type="chain" id="PRO_1000126376" description="Fructose-6-phosphate aldolase">
    <location>
        <begin position="1"/>
        <end position="220"/>
    </location>
</feature>
<feature type="active site" description="Schiff-base intermediate with substrate" evidence="1">
    <location>
        <position position="85"/>
    </location>
</feature>
<comment type="function">
    <text evidence="1">Catalyzes the reversible formation of fructose 6-phosphate from dihydroxyacetone and D-glyceraldehyde 3-phosphate via an aldolization reaction.</text>
</comment>
<comment type="catalytic activity">
    <reaction evidence="1">
        <text>beta-D-fructose 6-phosphate = dihydroxyacetone + D-glyceraldehyde 3-phosphate</text>
        <dbReference type="Rhea" id="RHEA:28002"/>
        <dbReference type="ChEBI" id="CHEBI:16016"/>
        <dbReference type="ChEBI" id="CHEBI:57634"/>
        <dbReference type="ChEBI" id="CHEBI:59776"/>
    </reaction>
</comment>
<comment type="subunit">
    <text evidence="1">Homodecamer.</text>
</comment>
<comment type="subcellular location">
    <subcellularLocation>
        <location evidence="1">Cytoplasm</location>
    </subcellularLocation>
</comment>
<comment type="similarity">
    <text evidence="1">Belongs to the transaldolase family. Type 3A subfamily.</text>
</comment>
<dbReference type="EC" id="4.1.2.-" evidence="1"/>
<dbReference type="EMBL" id="AM933173">
    <property type="protein sequence ID" value="CAR39101.1"/>
    <property type="molecule type" value="Genomic_DNA"/>
</dbReference>
<dbReference type="RefSeq" id="WP_000424871.1">
    <property type="nucleotide sequence ID" value="NC_011274.1"/>
</dbReference>
<dbReference type="SMR" id="B5RF58"/>
<dbReference type="KEGG" id="seg:SG3307"/>
<dbReference type="HOGENOM" id="CLU_079764_2_0_6"/>
<dbReference type="Proteomes" id="UP000008321">
    <property type="component" value="Chromosome"/>
</dbReference>
<dbReference type="GO" id="GO:0005737">
    <property type="term" value="C:cytoplasm"/>
    <property type="evidence" value="ECO:0007669"/>
    <property type="project" value="UniProtKB-SubCell"/>
</dbReference>
<dbReference type="GO" id="GO:0097023">
    <property type="term" value="F:fructose 6-phosphate aldolase activity"/>
    <property type="evidence" value="ECO:0007669"/>
    <property type="project" value="RHEA"/>
</dbReference>
<dbReference type="GO" id="GO:0006000">
    <property type="term" value="P:fructose metabolic process"/>
    <property type="evidence" value="ECO:0007669"/>
    <property type="project" value="UniProtKB-UniRule"/>
</dbReference>
<dbReference type="CDD" id="cd00956">
    <property type="entry name" value="Transaldolase_FSA"/>
    <property type="match status" value="1"/>
</dbReference>
<dbReference type="FunFam" id="3.20.20.70:FF:000018">
    <property type="entry name" value="Probable transaldolase"/>
    <property type="match status" value="1"/>
</dbReference>
<dbReference type="Gene3D" id="3.20.20.70">
    <property type="entry name" value="Aldolase class I"/>
    <property type="match status" value="1"/>
</dbReference>
<dbReference type="HAMAP" id="MF_00496">
    <property type="entry name" value="F6P_aldolase"/>
    <property type="match status" value="1"/>
</dbReference>
<dbReference type="InterPro" id="IPR013785">
    <property type="entry name" value="Aldolase_TIM"/>
</dbReference>
<dbReference type="InterPro" id="IPR023001">
    <property type="entry name" value="F6P_aldolase"/>
</dbReference>
<dbReference type="InterPro" id="IPR001585">
    <property type="entry name" value="TAL/FSA"/>
</dbReference>
<dbReference type="InterPro" id="IPR004731">
    <property type="entry name" value="Transaldolase_3B/F6P_aldolase"/>
</dbReference>
<dbReference type="InterPro" id="IPR018225">
    <property type="entry name" value="Transaldolase_AS"/>
</dbReference>
<dbReference type="InterPro" id="IPR033919">
    <property type="entry name" value="TSA/FSA_arc/bac"/>
</dbReference>
<dbReference type="NCBIfam" id="TIGR00875">
    <property type="entry name" value="fsa_talC_mipB"/>
    <property type="match status" value="1"/>
</dbReference>
<dbReference type="NCBIfam" id="NF009296">
    <property type="entry name" value="PRK12653.1"/>
    <property type="match status" value="1"/>
</dbReference>
<dbReference type="PANTHER" id="PTHR10683:SF40">
    <property type="entry name" value="FRUCTOSE-6-PHOSPHATE ALDOLASE 1-RELATED"/>
    <property type="match status" value="1"/>
</dbReference>
<dbReference type="PANTHER" id="PTHR10683">
    <property type="entry name" value="TRANSALDOLASE"/>
    <property type="match status" value="1"/>
</dbReference>
<dbReference type="Pfam" id="PF00923">
    <property type="entry name" value="TAL_FSA"/>
    <property type="match status" value="1"/>
</dbReference>
<dbReference type="SUPFAM" id="SSF51569">
    <property type="entry name" value="Aldolase"/>
    <property type="match status" value="1"/>
</dbReference>
<dbReference type="PROSITE" id="PS01054">
    <property type="entry name" value="TRANSALDOLASE_1"/>
    <property type="match status" value="1"/>
</dbReference>
<dbReference type="PROSITE" id="PS00958">
    <property type="entry name" value="TRANSALDOLASE_2"/>
    <property type="match status" value="1"/>
</dbReference>
<evidence type="ECO:0000255" key="1">
    <source>
        <dbReference type="HAMAP-Rule" id="MF_00496"/>
    </source>
</evidence>
<accession>B5RF58</accession>
<gene>
    <name evidence="1" type="primary">fsa</name>
    <name type="ordered locus">SG3307</name>
</gene>
<name>FSA_SALG2</name>
<organism>
    <name type="scientific">Salmonella gallinarum (strain 287/91 / NCTC 13346)</name>
    <dbReference type="NCBI Taxonomy" id="550538"/>
    <lineage>
        <taxon>Bacteria</taxon>
        <taxon>Pseudomonadati</taxon>
        <taxon>Pseudomonadota</taxon>
        <taxon>Gammaproteobacteria</taxon>
        <taxon>Enterobacterales</taxon>
        <taxon>Enterobacteriaceae</taxon>
        <taxon>Salmonella</taxon>
    </lineage>
</organism>
<sequence length="220" mass="23524">MELYLDTANVAEVERLARIFPIAGVTTNPSIVAASKESIWDVLPRLQNAIGEEGTLFAQTMSRNAKGMVEEAKRLNNAIPGIVVKIPVTAEGLAAIKLLKKEGIVTLGTAVYSASQGLLAALAGAKYVAPYVNRVDAQGGDGIRMVQELQTLLEHHAPDSMVLAASFKTPRQALDCLLAGCQAITLPLDVAQQMLNTPAVESAIEKFEQDWKNAFGNLNL</sequence>
<keyword id="KW-0119">Carbohydrate metabolism</keyword>
<keyword id="KW-0963">Cytoplasm</keyword>
<keyword id="KW-0456">Lyase</keyword>
<keyword id="KW-0704">Schiff base</keyword>